<sequence>MIWIMLATLAVVFVVGFRVLTSGARKAIRRLSDRLNIDVVPVESMVDQMGKSAGDEFLRYLHRPDESHLQNAAQVLLIWQIVIVDGSEQNLLQWHRILQKARLAAPITDAQVRLALGFLRETEPEMQDINAFQMRYNAFFQPAEGVHWLH</sequence>
<dbReference type="EMBL" id="AE005174">
    <property type="protein sequence ID" value="AAG58861.1"/>
    <property type="status" value="ALT_INIT"/>
    <property type="molecule type" value="Genomic_DNA"/>
</dbReference>
<dbReference type="EMBL" id="BA000007">
    <property type="protein sequence ID" value="BAB38022.2"/>
    <property type="molecule type" value="Genomic_DNA"/>
</dbReference>
<dbReference type="PIR" id="A86050">
    <property type="entry name" value="A86050"/>
</dbReference>
<dbReference type="PIR" id="G91203">
    <property type="entry name" value="G91203"/>
</dbReference>
<dbReference type="RefSeq" id="NP_312626.2">
    <property type="nucleotide sequence ID" value="NC_002695.1"/>
</dbReference>
<dbReference type="RefSeq" id="WP_001295241.1">
    <property type="nucleotide sequence ID" value="NZ_VOAI01000011.1"/>
</dbReference>
<dbReference type="SMR" id="P0ADL5"/>
<dbReference type="STRING" id="155864.Z5152"/>
<dbReference type="GeneID" id="913119"/>
<dbReference type="KEGG" id="ece:Z5152"/>
<dbReference type="KEGG" id="ecs:ECs_4599"/>
<dbReference type="PATRIC" id="fig|386585.9.peg.4807"/>
<dbReference type="eggNOG" id="ENOG502ZBKK">
    <property type="taxonomic scope" value="Bacteria"/>
</dbReference>
<dbReference type="HOGENOM" id="CLU_145987_0_0_6"/>
<dbReference type="OMA" id="ERPNEAH"/>
<dbReference type="Proteomes" id="UP000000558">
    <property type="component" value="Chromosome"/>
</dbReference>
<dbReference type="Proteomes" id="UP000002519">
    <property type="component" value="Chromosome"/>
</dbReference>
<dbReference type="InterPro" id="IPR009587">
    <property type="entry name" value="DUF1198"/>
</dbReference>
<dbReference type="Pfam" id="PF06711">
    <property type="entry name" value="DUF1198"/>
    <property type="match status" value="1"/>
</dbReference>
<accession>P0ADL5</accession>
<accession>P31439</accession>
<organism>
    <name type="scientific">Escherichia coli O157:H7</name>
    <dbReference type="NCBI Taxonomy" id="83334"/>
    <lineage>
        <taxon>Bacteria</taxon>
        <taxon>Pseudomonadati</taxon>
        <taxon>Pseudomonadota</taxon>
        <taxon>Gammaproteobacteria</taxon>
        <taxon>Enterobacterales</taxon>
        <taxon>Enterobacteriaceae</taxon>
        <taxon>Escherichia</taxon>
    </lineage>
</organism>
<proteinExistence type="predicted"/>
<feature type="chain" id="PRO_0000169619" description="Uncharacterized protein YicN">
    <location>
        <begin position="1"/>
        <end position="150"/>
    </location>
</feature>
<comment type="sequence caution" evidence="1">
    <conflict type="erroneous initiation">
        <sequence resource="EMBL-CDS" id="AAG58861"/>
    </conflict>
    <text>Extended N-terminus.</text>
</comment>
<name>YICN_ECO57</name>
<keyword id="KW-1185">Reference proteome</keyword>
<gene>
    <name type="primary">yicN</name>
    <name type="ordered locus">Z5152</name>
    <name type="ordered locus">ECs4599</name>
</gene>
<reference key="1">
    <citation type="journal article" date="2001" name="Nature">
        <title>Genome sequence of enterohaemorrhagic Escherichia coli O157:H7.</title>
        <authorList>
            <person name="Perna N.T."/>
            <person name="Plunkett G. III"/>
            <person name="Burland V."/>
            <person name="Mau B."/>
            <person name="Glasner J.D."/>
            <person name="Rose D.J."/>
            <person name="Mayhew G.F."/>
            <person name="Evans P.S."/>
            <person name="Gregor J."/>
            <person name="Kirkpatrick H.A."/>
            <person name="Posfai G."/>
            <person name="Hackett J."/>
            <person name="Klink S."/>
            <person name="Boutin A."/>
            <person name="Shao Y."/>
            <person name="Miller L."/>
            <person name="Grotbeck E.J."/>
            <person name="Davis N.W."/>
            <person name="Lim A."/>
            <person name="Dimalanta E.T."/>
            <person name="Potamousis K."/>
            <person name="Apodaca J."/>
            <person name="Anantharaman T.S."/>
            <person name="Lin J."/>
            <person name="Yen G."/>
            <person name="Schwartz D.C."/>
            <person name="Welch R.A."/>
            <person name="Blattner F.R."/>
        </authorList>
    </citation>
    <scope>NUCLEOTIDE SEQUENCE [LARGE SCALE GENOMIC DNA]</scope>
    <source>
        <strain>O157:H7 / EDL933 / ATCC 700927 / EHEC</strain>
    </source>
</reference>
<reference key="2">
    <citation type="journal article" date="2001" name="DNA Res.">
        <title>Complete genome sequence of enterohemorrhagic Escherichia coli O157:H7 and genomic comparison with a laboratory strain K-12.</title>
        <authorList>
            <person name="Hayashi T."/>
            <person name="Makino K."/>
            <person name="Ohnishi M."/>
            <person name="Kurokawa K."/>
            <person name="Ishii K."/>
            <person name="Yokoyama K."/>
            <person name="Han C.-G."/>
            <person name="Ohtsubo E."/>
            <person name="Nakayama K."/>
            <person name="Murata T."/>
            <person name="Tanaka M."/>
            <person name="Tobe T."/>
            <person name="Iida T."/>
            <person name="Takami H."/>
            <person name="Honda T."/>
            <person name="Sasakawa C."/>
            <person name="Ogasawara N."/>
            <person name="Yasunaga T."/>
            <person name="Kuhara S."/>
            <person name="Shiba T."/>
            <person name="Hattori M."/>
            <person name="Shinagawa H."/>
        </authorList>
    </citation>
    <scope>NUCLEOTIDE SEQUENCE [LARGE SCALE GENOMIC DNA]</scope>
    <source>
        <strain>O157:H7 / Sakai / RIMD 0509952 / EHEC</strain>
    </source>
</reference>
<protein>
    <recommendedName>
        <fullName>Uncharacterized protein YicN</fullName>
    </recommendedName>
</protein>
<evidence type="ECO:0000305" key="1"/>